<evidence type="ECO:0000250" key="1">
    <source>
        <dbReference type="UniProtKB" id="O15145"/>
    </source>
</evidence>
<evidence type="ECO:0000269" key="2">
    <source>
    </source>
</evidence>
<evidence type="ECO:0000269" key="3">
    <source>
    </source>
</evidence>
<evidence type="ECO:0000305" key="4"/>
<evidence type="ECO:0000305" key="5">
    <source>
    </source>
</evidence>
<evidence type="ECO:0000312" key="6">
    <source>
        <dbReference type="EMBL" id="OCT98422.1"/>
    </source>
</evidence>
<comment type="function">
    <text evidence="1 2 5">Component of the Arp2/3 complex, a multiprotein complex that mediates actin polymerization upon stimulation by nucleation-promoting factor (NPF) (PubMed:17178911). The Arp2/3 complex mediates the formation of branched actin networks in the cytoplasm, providing the force for cell motility (PubMed:17178911). In addition to its role in the cytoplasmic cytoskeleton, the Arp2/3 complex also promotes actin polymerization in the nucleus, thereby regulating gene transcription and repair of damaged DNA (Probable). The Arp2/3 complex promotes homologous recombination (HR) repair in response to DNA damage by promoting nuclear actin polymerization, leading to drive motility of double-strand breaks (DSBs) (By similarity).</text>
</comment>
<comment type="subunit">
    <text evidence="3">Component of the Arp2/3 complex composed of actr2/arp2, actr3/arp3, arpc1 (arpc1a or arpc1b), arpc2, arpc3, arpc4 and arpc5.</text>
</comment>
<comment type="subcellular location">
    <subcellularLocation>
        <location evidence="2">Cytoplasm</location>
        <location evidence="2">Cytoskeleton</location>
    </subcellularLocation>
    <subcellularLocation>
        <location evidence="2">Cell projection</location>
    </subcellularLocation>
    <subcellularLocation>
        <location evidence="3">Nucleus</location>
    </subcellularLocation>
</comment>
<comment type="similarity">
    <text evidence="4">Belongs to the ARPC3 family.</text>
</comment>
<organism>
    <name type="scientific">Xenopus laevis</name>
    <name type="common">African clawed frog</name>
    <dbReference type="NCBI Taxonomy" id="8355"/>
    <lineage>
        <taxon>Eukaryota</taxon>
        <taxon>Metazoa</taxon>
        <taxon>Chordata</taxon>
        <taxon>Craniata</taxon>
        <taxon>Vertebrata</taxon>
        <taxon>Euteleostomi</taxon>
        <taxon>Amphibia</taxon>
        <taxon>Batrachia</taxon>
        <taxon>Anura</taxon>
        <taxon>Pipoidea</taxon>
        <taxon>Pipidae</taxon>
        <taxon>Xenopodinae</taxon>
        <taxon>Xenopus</taxon>
        <taxon>Xenopus</taxon>
    </lineage>
</organism>
<sequence>MPAYHSMLMEPDTKLIGNMAMLPIRSQFKGPAPRETKDTDIIDEAIYYFKANVFFKNYEIKNEADRTLIYITLYISECLKKLQKCNSKGQGEKEMYTLGITNFPIPGEPGFPLNAMYVKPSNKQEDEVMRAYLQQLRQETGLRLCDKVFDPQTDKPSKWWTCFVKRQFMNKSLSAPGQ</sequence>
<protein>
    <recommendedName>
        <fullName>Actin-related protein 2/3 complex subunit 3-A</fullName>
    </recommendedName>
</protein>
<dbReference type="EMBL" id="EF011866">
    <property type="protein sequence ID" value="ABL63899.1"/>
    <property type="molecule type" value="mRNA"/>
</dbReference>
<dbReference type="EMBL" id="CM004467">
    <property type="protein sequence ID" value="OCT98422.1"/>
    <property type="molecule type" value="Genomic_DNA"/>
</dbReference>
<dbReference type="EMBL" id="BC169449">
    <property type="protein sequence ID" value="AAI69449.1"/>
    <property type="molecule type" value="mRNA"/>
</dbReference>
<dbReference type="EMBL" id="BC169453">
    <property type="protein sequence ID" value="AAI69453.1"/>
    <property type="molecule type" value="mRNA"/>
</dbReference>
<dbReference type="RefSeq" id="NP_001090588.1">
    <property type="nucleotide sequence ID" value="NM_001097119.1"/>
</dbReference>
<dbReference type="SMR" id="A1DPK7"/>
<dbReference type="STRING" id="8355.A1DPK7"/>
<dbReference type="PaxDb" id="8355-A1DPK7"/>
<dbReference type="GeneID" id="100036831"/>
<dbReference type="KEGG" id="xla:100036831"/>
<dbReference type="CTD" id="100036831"/>
<dbReference type="OrthoDB" id="200404at2759"/>
<dbReference type="Proteomes" id="UP000186698">
    <property type="component" value="Chromosome 1S"/>
</dbReference>
<dbReference type="Proteomes" id="UP000694892">
    <property type="component" value="Chromosome 1S"/>
</dbReference>
<dbReference type="Bgee" id="100036831">
    <property type="expression patterns" value="Expressed in spleen and 19 other cell types or tissues"/>
</dbReference>
<dbReference type="GO" id="GO:0005885">
    <property type="term" value="C:Arp2/3 protein complex"/>
    <property type="evidence" value="ECO:0000314"/>
    <property type="project" value="UniProtKB"/>
</dbReference>
<dbReference type="GO" id="GO:0042995">
    <property type="term" value="C:cell projection"/>
    <property type="evidence" value="ECO:0007669"/>
    <property type="project" value="UniProtKB-SubCell"/>
</dbReference>
<dbReference type="GO" id="GO:0005737">
    <property type="term" value="C:cytoplasm"/>
    <property type="evidence" value="ECO:0007669"/>
    <property type="project" value="UniProtKB-KW"/>
</dbReference>
<dbReference type="GO" id="GO:0005634">
    <property type="term" value="C:nucleus"/>
    <property type="evidence" value="ECO:0000314"/>
    <property type="project" value="UniProtKB"/>
</dbReference>
<dbReference type="GO" id="GO:0035861">
    <property type="term" value="C:site of double-strand break"/>
    <property type="evidence" value="ECO:0000314"/>
    <property type="project" value="UniProtKB"/>
</dbReference>
<dbReference type="GO" id="GO:0003779">
    <property type="term" value="F:actin binding"/>
    <property type="evidence" value="ECO:0007669"/>
    <property type="project" value="UniProtKB-KW"/>
</dbReference>
<dbReference type="GO" id="GO:0034314">
    <property type="term" value="P:Arp2/3 complex-mediated actin nucleation"/>
    <property type="evidence" value="ECO:0000318"/>
    <property type="project" value="GO_Central"/>
</dbReference>
<dbReference type="GO" id="GO:0030833">
    <property type="term" value="P:regulation of actin filament polymerization"/>
    <property type="evidence" value="ECO:0007669"/>
    <property type="project" value="InterPro"/>
</dbReference>
<dbReference type="FunFam" id="1.10.1760.10:FF:000001">
    <property type="entry name" value="Actin-related protein 2/3 complex subunit 3"/>
    <property type="match status" value="1"/>
</dbReference>
<dbReference type="Gene3D" id="1.10.1760.10">
    <property type="entry name" value="Actin-related protein 2/3 complex subunit 3"/>
    <property type="match status" value="1"/>
</dbReference>
<dbReference type="InterPro" id="IPR007204">
    <property type="entry name" value="ARPC3"/>
</dbReference>
<dbReference type="InterPro" id="IPR036753">
    <property type="entry name" value="ARPC3_sf"/>
</dbReference>
<dbReference type="PANTHER" id="PTHR12391">
    <property type="entry name" value="ARP2/3 COMPLEX 21 KD SUBUNIT"/>
    <property type="match status" value="1"/>
</dbReference>
<dbReference type="Pfam" id="PF04062">
    <property type="entry name" value="P21-Arc"/>
    <property type="match status" value="1"/>
</dbReference>
<dbReference type="PIRSF" id="PIRSF016315">
    <property type="entry name" value="ARP2/3_P21-Arc"/>
    <property type="match status" value="1"/>
</dbReference>
<dbReference type="SUPFAM" id="SSF69060">
    <property type="entry name" value="Arp2/3 complex 21 kDa subunit ARPC3"/>
    <property type="match status" value="1"/>
</dbReference>
<keyword id="KW-0009">Actin-binding</keyword>
<keyword id="KW-0966">Cell projection</keyword>
<keyword id="KW-0963">Cytoplasm</keyword>
<keyword id="KW-0206">Cytoskeleton</keyword>
<keyword id="KW-0539">Nucleus</keyword>
<keyword id="KW-1185">Reference proteome</keyword>
<reference key="1">
    <citation type="journal article" date="2006" name="J. Cell Biol.">
        <title>Actin turnover-dependent fast dissociation of capping protein in the dendritic nucleation actin network: evidence of frequent filament severing.</title>
        <authorList>
            <person name="Miyoshi T."/>
            <person name="Tsuji T."/>
            <person name="Higashida C."/>
            <person name="Hertzog M."/>
            <person name="Fujita A."/>
            <person name="Narumiya S."/>
            <person name="Scita G."/>
            <person name="Watanabe N."/>
        </authorList>
    </citation>
    <scope>NUCLEOTIDE SEQUENCE [MRNA]</scope>
    <scope>FUNCTION</scope>
    <scope>SUBCELLULAR LOCATION</scope>
</reference>
<reference key="2">
    <citation type="journal article" date="2016" name="Nature">
        <title>Genome evolution in the allotetraploid frog Xenopus laevis.</title>
        <authorList>
            <person name="Session A.M."/>
            <person name="Uno Y."/>
            <person name="Kwon T."/>
            <person name="Chapman J.A."/>
            <person name="Toyoda A."/>
            <person name="Takahashi S."/>
            <person name="Fukui A."/>
            <person name="Hikosaka A."/>
            <person name="Suzuki A."/>
            <person name="Kondo M."/>
            <person name="van Heeringen S.J."/>
            <person name="Quigley I."/>
            <person name="Heinz S."/>
            <person name="Ogino H."/>
            <person name="Ochi H."/>
            <person name="Hellsten U."/>
            <person name="Lyons J.B."/>
            <person name="Simakov O."/>
            <person name="Putnam N."/>
            <person name="Stites J."/>
            <person name="Kuroki Y."/>
            <person name="Tanaka T."/>
            <person name="Michiue T."/>
            <person name="Watanabe M."/>
            <person name="Bogdanovic O."/>
            <person name="Lister R."/>
            <person name="Georgiou G."/>
            <person name="Paranjpe S.S."/>
            <person name="van Kruijsbergen I."/>
            <person name="Shu S."/>
            <person name="Carlson J."/>
            <person name="Kinoshita T."/>
            <person name="Ohta Y."/>
            <person name="Mawaribuchi S."/>
            <person name="Jenkins J."/>
            <person name="Grimwood J."/>
            <person name="Schmutz J."/>
            <person name="Mitros T."/>
            <person name="Mozaffari S.V."/>
            <person name="Suzuki Y."/>
            <person name="Haramoto Y."/>
            <person name="Yamamoto T.S."/>
            <person name="Takagi C."/>
            <person name="Heald R."/>
            <person name="Miller K."/>
            <person name="Haudenschild C."/>
            <person name="Kitzman J."/>
            <person name="Nakayama T."/>
            <person name="Izutsu Y."/>
            <person name="Robert J."/>
            <person name="Fortriede J."/>
            <person name="Burns K."/>
            <person name="Lotay V."/>
            <person name="Karimi K."/>
            <person name="Yasuoka Y."/>
            <person name="Dichmann D.S."/>
            <person name="Flajnik M.F."/>
            <person name="Houston D.W."/>
            <person name="Shendure J."/>
            <person name="DuPasquier L."/>
            <person name="Vize P.D."/>
            <person name="Zorn A.M."/>
            <person name="Ito M."/>
            <person name="Marcotte E.M."/>
            <person name="Wallingford J.B."/>
            <person name="Ito Y."/>
            <person name="Asashima M."/>
            <person name="Ueno N."/>
            <person name="Matsuda Y."/>
            <person name="Veenstra G.J."/>
            <person name="Fujiyama A."/>
            <person name="Harland R.M."/>
            <person name="Taira M."/>
            <person name="Rokhsar D.S."/>
        </authorList>
    </citation>
    <scope>NUCLEOTIDE SEQUENCE [LARGE SCALE GENOMIC DNA]</scope>
    <source>
        <strain>J</strain>
    </source>
</reference>
<reference key="3">
    <citation type="submission" date="2008-11" db="EMBL/GenBank/DDBJ databases">
        <authorList>
            <consortium name="NIH - Xenopus Gene Collection (XGC) project"/>
        </authorList>
    </citation>
    <scope>NUCLEOTIDE SEQUENCE [LARGE SCALE MRNA]</scope>
    <source>
        <tissue>Gastrula</tissue>
    </source>
</reference>
<reference key="4">
    <citation type="journal article" date="2018" name="Nature">
        <title>Nuclear ARP2/3 drives DNA break clustering for homology-directed repair.</title>
        <authorList>
            <person name="Schrank B.R."/>
            <person name="Aparicio T."/>
            <person name="Li Y."/>
            <person name="Chang W."/>
            <person name="Chait B.T."/>
            <person name="Gundersen G.G."/>
            <person name="Gottesman M.E."/>
            <person name="Gautier J."/>
        </authorList>
    </citation>
    <scope>FUNCTION</scope>
    <scope>SUBCELLULAR LOCATION</scope>
    <scope>IDENTIFICATION IN THE ARP2/3 COMPLEX</scope>
    <scope>IDENTIFICATION BY MASS SPECTROMETRY</scope>
</reference>
<gene>
    <name type="primary">arpc3-a</name>
    <name evidence="6" type="ORF">XELAEV_18010654mg</name>
</gene>
<accession>A1DPK7</accession>
<name>ARC3A_XENLA</name>
<feature type="chain" id="PRO_0000445561" description="Actin-related protein 2/3 complex subunit 3-A">
    <location>
        <begin position="1"/>
        <end position="178"/>
    </location>
</feature>
<proteinExistence type="evidence at protein level"/>